<feature type="chain" id="PRO_1000024328" description="Cation-efflux pump FieF">
    <location>
        <begin position="1"/>
        <end position="300"/>
    </location>
</feature>
<feature type="transmembrane region" description="Helical" evidence="1">
    <location>
        <begin position="12"/>
        <end position="32"/>
    </location>
</feature>
<feature type="transmembrane region" description="Helical" evidence="1">
    <location>
        <begin position="39"/>
        <end position="59"/>
    </location>
</feature>
<feature type="transmembrane region" description="Helical" evidence="1">
    <location>
        <begin position="82"/>
        <end position="102"/>
    </location>
</feature>
<feature type="transmembrane region" description="Helical" evidence="1">
    <location>
        <begin position="114"/>
        <end position="134"/>
    </location>
</feature>
<feature type="transmembrane region" description="Helical" evidence="1">
    <location>
        <begin position="156"/>
        <end position="176"/>
    </location>
</feature>
<feature type="transmembrane region" description="Helical" evidence="1">
    <location>
        <begin position="178"/>
        <end position="198"/>
    </location>
</feature>
<feature type="binding site" evidence="1">
    <location>
        <position position="45"/>
    </location>
    <ligand>
        <name>Zn(2+)</name>
        <dbReference type="ChEBI" id="CHEBI:29105"/>
    </ligand>
</feature>
<feature type="binding site" evidence="1">
    <location>
        <position position="49"/>
    </location>
    <ligand>
        <name>Zn(2+)</name>
        <dbReference type="ChEBI" id="CHEBI:29105"/>
    </ligand>
</feature>
<feature type="binding site" evidence="1">
    <location>
        <position position="153"/>
    </location>
    <ligand>
        <name>Zn(2+)</name>
        <dbReference type="ChEBI" id="CHEBI:29105"/>
    </ligand>
</feature>
<feature type="binding site" evidence="1">
    <location>
        <position position="157"/>
    </location>
    <ligand>
        <name>Zn(2+)</name>
        <dbReference type="ChEBI" id="CHEBI:29105"/>
    </ligand>
</feature>
<proteinExistence type="inferred from homology"/>
<organism>
    <name type="scientific">Shigella boydii serotype 4 (strain Sb227)</name>
    <dbReference type="NCBI Taxonomy" id="300268"/>
    <lineage>
        <taxon>Bacteria</taxon>
        <taxon>Pseudomonadati</taxon>
        <taxon>Pseudomonadota</taxon>
        <taxon>Gammaproteobacteria</taxon>
        <taxon>Enterobacterales</taxon>
        <taxon>Enterobacteriaceae</taxon>
        <taxon>Shigella</taxon>
    </lineage>
</organism>
<sequence>MNQSYGRLVSRAAIAATAMASLLLLIKIFAWWYTGSVSILAALVDSLVDIGASLTNLLVVRYSLQPADDNHSFGHGKAESLAALAQSMFISGSALFLFLTGIQHLISPTPMIDPGVGVIVTIVALICTIILVSFQRWVVRRTQSQAVRADMLHYQSDVMMNGAILLALGLSWYGWHRADALFALGIGIYILYSALRMGYEAVQSLLDRALPDEERQEIIDIVTSWPGVSGAHDLRTRQSGPTRFIQIHLEMEDSLPLVQAHMVADQVEQAILRRFPGSDVIIHQDPCSVVPREGKRSMLS</sequence>
<name>FIEF_SHIBS</name>
<reference key="1">
    <citation type="journal article" date="2005" name="Nucleic Acids Res.">
        <title>Genome dynamics and diversity of Shigella species, the etiologic agents of bacillary dysentery.</title>
        <authorList>
            <person name="Yang F."/>
            <person name="Yang J."/>
            <person name="Zhang X."/>
            <person name="Chen L."/>
            <person name="Jiang Y."/>
            <person name="Yan Y."/>
            <person name="Tang X."/>
            <person name="Wang J."/>
            <person name="Xiong Z."/>
            <person name="Dong J."/>
            <person name="Xue Y."/>
            <person name="Zhu Y."/>
            <person name="Xu X."/>
            <person name="Sun L."/>
            <person name="Chen S."/>
            <person name="Nie H."/>
            <person name="Peng J."/>
            <person name="Xu J."/>
            <person name="Wang Y."/>
            <person name="Yuan Z."/>
            <person name="Wen Y."/>
            <person name="Yao Z."/>
            <person name="Shen Y."/>
            <person name="Qiang B."/>
            <person name="Hou Y."/>
            <person name="Yu J."/>
            <person name="Jin Q."/>
        </authorList>
    </citation>
    <scope>NUCLEOTIDE SEQUENCE [LARGE SCALE GENOMIC DNA]</scope>
    <source>
        <strain>Sb227</strain>
    </source>
</reference>
<keyword id="KW-0997">Cell inner membrane</keyword>
<keyword id="KW-1003">Cell membrane</keyword>
<keyword id="KW-0406">Ion transport</keyword>
<keyword id="KW-0408">Iron</keyword>
<keyword id="KW-0410">Iron transport</keyword>
<keyword id="KW-0472">Membrane</keyword>
<keyword id="KW-0479">Metal-binding</keyword>
<keyword id="KW-0812">Transmembrane</keyword>
<keyword id="KW-1133">Transmembrane helix</keyword>
<keyword id="KW-0813">Transport</keyword>
<keyword id="KW-0862">Zinc</keyword>
<keyword id="KW-0864">Zinc transport</keyword>
<dbReference type="EMBL" id="CP000036">
    <property type="protein sequence ID" value="ABB68383.1"/>
    <property type="molecule type" value="Genomic_DNA"/>
</dbReference>
<dbReference type="RefSeq" id="WP_001076735.1">
    <property type="nucleotide sequence ID" value="NC_007613.1"/>
</dbReference>
<dbReference type="SMR" id="Q31U75"/>
<dbReference type="KEGG" id="sbo:SBO_3932"/>
<dbReference type="HOGENOM" id="CLU_013430_3_0_6"/>
<dbReference type="Proteomes" id="UP000007067">
    <property type="component" value="Chromosome"/>
</dbReference>
<dbReference type="GO" id="GO:0005886">
    <property type="term" value="C:plasma membrane"/>
    <property type="evidence" value="ECO:0007669"/>
    <property type="project" value="UniProtKB-SubCell"/>
</dbReference>
<dbReference type="GO" id="GO:0015086">
    <property type="term" value="F:cadmium ion transmembrane transporter activity"/>
    <property type="evidence" value="ECO:0007669"/>
    <property type="project" value="UniProtKB-UniRule"/>
</dbReference>
<dbReference type="GO" id="GO:0015093">
    <property type="term" value="F:ferrous iron transmembrane transporter activity"/>
    <property type="evidence" value="ECO:0007669"/>
    <property type="project" value="TreeGrafter"/>
</dbReference>
<dbReference type="GO" id="GO:0046872">
    <property type="term" value="F:metal ion binding"/>
    <property type="evidence" value="ECO:0007669"/>
    <property type="project" value="UniProtKB-KW"/>
</dbReference>
<dbReference type="GO" id="GO:0015341">
    <property type="term" value="F:zinc efflux antiporter activity"/>
    <property type="evidence" value="ECO:0007669"/>
    <property type="project" value="TreeGrafter"/>
</dbReference>
<dbReference type="GO" id="GO:0006882">
    <property type="term" value="P:intracellular zinc ion homeostasis"/>
    <property type="evidence" value="ECO:0007669"/>
    <property type="project" value="TreeGrafter"/>
</dbReference>
<dbReference type="FunFam" id="1.20.1510.10:FF:000001">
    <property type="entry name" value="Ferrous-iron efflux pump FieF"/>
    <property type="match status" value="1"/>
</dbReference>
<dbReference type="FunFam" id="3.30.70.1350:FF:000002">
    <property type="entry name" value="Ferrous-iron efflux pump FieF"/>
    <property type="match status" value="1"/>
</dbReference>
<dbReference type="Gene3D" id="1.20.1510.10">
    <property type="entry name" value="Cation efflux protein transmembrane domain"/>
    <property type="match status" value="1"/>
</dbReference>
<dbReference type="Gene3D" id="3.30.70.1350">
    <property type="entry name" value="Cation efflux protein, cytoplasmic domain"/>
    <property type="match status" value="1"/>
</dbReference>
<dbReference type="HAMAP" id="MF_01425">
    <property type="entry name" value="Cation_efflux_FieF"/>
    <property type="match status" value="1"/>
</dbReference>
<dbReference type="InterPro" id="IPR002524">
    <property type="entry name" value="Cation_efflux"/>
</dbReference>
<dbReference type="InterPro" id="IPR027470">
    <property type="entry name" value="Cation_efflux_CTD"/>
</dbReference>
<dbReference type="InterPro" id="IPR036837">
    <property type="entry name" value="Cation_efflux_CTD_sf"/>
</dbReference>
<dbReference type="InterPro" id="IPR023783">
    <property type="entry name" value="Cation_efflux_FieF"/>
</dbReference>
<dbReference type="InterPro" id="IPR027469">
    <property type="entry name" value="Cation_efflux_TMD_sf"/>
</dbReference>
<dbReference type="InterPro" id="IPR050291">
    <property type="entry name" value="CDF_Transporter"/>
</dbReference>
<dbReference type="NCBIfam" id="TIGR01297">
    <property type="entry name" value="CDF"/>
    <property type="match status" value="1"/>
</dbReference>
<dbReference type="NCBIfam" id="NF007064">
    <property type="entry name" value="PRK09509.1"/>
    <property type="match status" value="1"/>
</dbReference>
<dbReference type="PANTHER" id="PTHR43840:SF41">
    <property type="entry name" value="CATION-EFFLUX PUMP FIEF"/>
    <property type="match status" value="1"/>
</dbReference>
<dbReference type="PANTHER" id="PTHR43840">
    <property type="entry name" value="MITOCHONDRIAL METAL TRANSPORTER 1-RELATED"/>
    <property type="match status" value="1"/>
</dbReference>
<dbReference type="Pfam" id="PF01545">
    <property type="entry name" value="Cation_efflux"/>
    <property type="match status" value="1"/>
</dbReference>
<dbReference type="Pfam" id="PF16916">
    <property type="entry name" value="ZT_dimer"/>
    <property type="match status" value="1"/>
</dbReference>
<dbReference type="SUPFAM" id="SSF160240">
    <property type="entry name" value="Cation efflux protein cytoplasmic domain-like"/>
    <property type="match status" value="1"/>
</dbReference>
<dbReference type="SUPFAM" id="SSF161111">
    <property type="entry name" value="Cation efflux protein transmembrane domain-like"/>
    <property type="match status" value="1"/>
</dbReference>
<gene>
    <name evidence="1" type="primary">fieF</name>
    <name type="ordered locus">SBO_3932</name>
</gene>
<accession>Q31U75</accession>
<evidence type="ECO:0000255" key="1">
    <source>
        <dbReference type="HAMAP-Rule" id="MF_01425"/>
    </source>
</evidence>
<comment type="function">
    <text evidence="1">Divalent metal cation transporter which exports Zn(2+), Cd(2+) and possibly Fe(2+). May be involved in zinc and iron detoxification by efflux.</text>
</comment>
<comment type="catalytic activity">
    <reaction evidence="1">
        <text>Zn(2+)(in) + H(+)(out) = Zn(2+)(out) + H(+)(in)</text>
        <dbReference type="Rhea" id="RHEA:28839"/>
        <dbReference type="ChEBI" id="CHEBI:15378"/>
        <dbReference type="ChEBI" id="CHEBI:29105"/>
    </reaction>
</comment>
<comment type="catalytic activity">
    <reaction evidence="1">
        <text>Cd(2+)(in) + H(+)(out) = Cd(2+)(out) + H(+)(in)</text>
        <dbReference type="Rhea" id="RHEA:28739"/>
        <dbReference type="ChEBI" id="CHEBI:15378"/>
        <dbReference type="ChEBI" id="CHEBI:48775"/>
    </reaction>
</comment>
<comment type="catalytic activity">
    <reaction evidence="1">
        <text>Fe(2+)(in) + H(+)(out) = Fe(2+)(out) + H(+)(in)</text>
        <dbReference type="Rhea" id="RHEA:29439"/>
        <dbReference type="ChEBI" id="CHEBI:15378"/>
        <dbReference type="ChEBI" id="CHEBI:29033"/>
    </reaction>
</comment>
<comment type="subunit">
    <text evidence="1">Homodimer.</text>
</comment>
<comment type="subcellular location">
    <subcellularLocation>
        <location evidence="1">Cell inner membrane</location>
        <topology evidence="1">Multi-pass membrane protein</topology>
    </subcellularLocation>
</comment>
<comment type="similarity">
    <text evidence="1">Belongs to the cation diffusion facilitator (CDF) transporter (TC 2.A.4) family. FieF subfamily.</text>
</comment>
<protein>
    <recommendedName>
        <fullName evidence="1">Cation-efflux pump FieF</fullName>
    </recommendedName>
</protein>